<keyword id="KW-0963">Cytoplasm</keyword>
<keyword id="KW-0328">Glycosyltransferase</keyword>
<keyword id="KW-0660">Purine salvage</keyword>
<keyword id="KW-1185">Reference proteome</keyword>
<keyword id="KW-0808">Transferase</keyword>
<sequence>MNDLNELKKYIQDVKDFPIKGIVFKDISPLLANGEIFRIVVEKMAEKVREVDVIIGPDARGFIFGAAVASYLKKPFVMIRKEGKLPHNTIKIDYKLEYGMGSLEIQKDLIKPGQSVAILDDVLATGGTTKASVELVKKLGAKVTKAVFLMELEFLNGKEKINAEVISLLKY</sequence>
<reference key="1">
    <citation type="journal article" date="2004" name="Genome Res.">
        <title>The complete genome and proteome of Mycoplasma mobile.</title>
        <authorList>
            <person name="Jaffe J.D."/>
            <person name="Stange-Thomann N."/>
            <person name="Smith C."/>
            <person name="DeCaprio D."/>
            <person name="Fisher S."/>
            <person name="Butler J."/>
            <person name="Calvo S."/>
            <person name="Elkins T."/>
            <person name="FitzGerald M.G."/>
            <person name="Hafez N."/>
            <person name="Kodira C.D."/>
            <person name="Major J."/>
            <person name="Wang S."/>
            <person name="Wilkinson J."/>
            <person name="Nicol R."/>
            <person name="Nusbaum C."/>
            <person name="Birren B."/>
            <person name="Berg H.C."/>
            <person name="Church G.M."/>
        </authorList>
    </citation>
    <scope>NUCLEOTIDE SEQUENCE [LARGE SCALE GENOMIC DNA]</scope>
    <source>
        <strain>ATCC 43663 / NCTC 11711 / 163 K</strain>
    </source>
</reference>
<name>APT_MYCM1</name>
<dbReference type="EC" id="2.4.2.7" evidence="1"/>
<dbReference type="EMBL" id="AE017308">
    <property type="protein sequence ID" value="AAT27684.1"/>
    <property type="molecule type" value="Genomic_DNA"/>
</dbReference>
<dbReference type="RefSeq" id="WP_011264718.1">
    <property type="nucleotide sequence ID" value="NC_006908.1"/>
</dbReference>
<dbReference type="SMR" id="Q6KI92"/>
<dbReference type="STRING" id="267748.MMOB1980"/>
<dbReference type="KEGG" id="mmo:MMOB1980"/>
<dbReference type="eggNOG" id="COG0503">
    <property type="taxonomic scope" value="Bacteria"/>
</dbReference>
<dbReference type="HOGENOM" id="CLU_063339_3_0_14"/>
<dbReference type="OrthoDB" id="9803963at2"/>
<dbReference type="UniPathway" id="UPA00588">
    <property type="reaction ID" value="UER00646"/>
</dbReference>
<dbReference type="Proteomes" id="UP000009072">
    <property type="component" value="Chromosome"/>
</dbReference>
<dbReference type="GO" id="GO:0005737">
    <property type="term" value="C:cytoplasm"/>
    <property type="evidence" value="ECO:0007669"/>
    <property type="project" value="UniProtKB-SubCell"/>
</dbReference>
<dbReference type="GO" id="GO:0002055">
    <property type="term" value="F:adenine binding"/>
    <property type="evidence" value="ECO:0007669"/>
    <property type="project" value="TreeGrafter"/>
</dbReference>
<dbReference type="GO" id="GO:0003999">
    <property type="term" value="F:adenine phosphoribosyltransferase activity"/>
    <property type="evidence" value="ECO:0007669"/>
    <property type="project" value="UniProtKB-UniRule"/>
</dbReference>
<dbReference type="GO" id="GO:0016208">
    <property type="term" value="F:AMP binding"/>
    <property type="evidence" value="ECO:0007669"/>
    <property type="project" value="TreeGrafter"/>
</dbReference>
<dbReference type="GO" id="GO:0006168">
    <property type="term" value="P:adenine salvage"/>
    <property type="evidence" value="ECO:0007669"/>
    <property type="project" value="InterPro"/>
</dbReference>
<dbReference type="GO" id="GO:0044209">
    <property type="term" value="P:AMP salvage"/>
    <property type="evidence" value="ECO:0007669"/>
    <property type="project" value="UniProtKB-UniRule"/>
</dbReference>
<dbReference type="GO" id="GO:0006166">
    <property type="term" value="P:purine ribonucleoside salvage"/>
    <property type="evidence" value="ECO:0007669"/>
    <property type="project" value="UniProtKB-KW"/>
</dbReference>
<dbReference type="CDD" id="cd06223">
    <property type="entry name" value="PRTases_typeI"/>
    <property type="match status" value="1"/>
</dbReference>
<dbReference type="FunFam" id="3.40.50.2020:FF:000021">
    <property type="entry name" value="Adenine phosphoribosyltransferase"/>
    <property type="match status" value="1"/>
</dbReference>
<dbReference type="Gene3D" id="3.40.50.2020">
    <property type="match status" value="1"/>
</dbReference>
<dbReference type="HAMAP" id="MF_00004">
    <property type="entry name" value="Aden_phosphoribosyltr"/>
    <property type="match status" value="1"/>
</dbReference>
<dbReference type="InterPro" id="IPR005764">
    <property type="entry name" value="Ade_phspho_trans"/>
</dbReference>
<dbReference type="InterPro" id="IPR000836">
    <property type="entry name" value="PRibTrfase_dom"/>
</dbReference>
<dbReference type="InterPro" id="IPR029057">
    <property type="entry name" value="PRTase-like"/>
</dbReference>
<dbReference type="InterPro" id="IPR050054">
    <property type="entry name" value="UPRTase/APRTase"/>
</dbReference>
<dbReference type="NCBIfam" id="TIGR01090">
    <property type="entry name" value="apt"/>
    <property type="match status" value="1"/>
</dbReference>
<dbReference type="NCBIfam" id="NF002634">
    <property type="entry name" value="PRK02304.1-3"/>
    <property type="match status" value="1"/>
</dbReference>
<dbReference type="NCBIfam" id="NF002636">
    <property type="entry name" value="PRK02304.1-5"/>
    <property type="match status" value="1"/>
</dbReference>
<dbReference type="PANTHER" id="PTHR32315">
    <property type="entry name" value="ADENINE PHOSPHORIBOSYLTRANSFERASE"/>
    <property type="match status" value="1"/>
</dbReference>
<dbReference type="PANTHER" id="PTHR32315:SF3">
    <property type="entry name" value="ADENINE PHOSPHORIBOSYLTRANSFERASE"/>
    <property type="match status" value="1"/>
</dbReference>
<dbReference type="Pfam" id="PF00156">
    <property type="entry name" value="Pribosyltran"/>
    <property type="match status" value="1"/>
</dbReference>
<dbReference type="SUPFAM" id="SSF53271">
    <property type="entry name" value="PRTase-like"/>
    <property type="match status" value="1"/>
</dbReference>
<gene>
    <name evidence="1" type="primary">apt</name>
    <name type="ordered locus">MMOB1980</name>
</gene>
<protein>
    <recommendedName>
        <fullName evidence="1">Adenine phosphoribosyltransferase</fullName>
        <shortName evidence="1">APRT</shortName>
        <ecNumber evidence="1">2.4.2.7</ecNumber>
    </recommendedName>
</protein>
<comment type="function">
    <text evidence="1">Catalyzes a salvage reaction resulting in the formation of AMP, that is energically less costly than de novo synthesis.</text>
</comment>
<comment type="catalytic activity">
    <reaction evidence="1">
        <text>AMP + diphosphate = 5-phospho-alpha-D-ribose 1-diphosphate + adenine</text>
        <dbReference type="Rhea" id="RHEA:16609"/>
        <dbReference type="ChEBI" id="CHEBI:16708"/>
        <dbReference type="ChEBI" id="CHEBI:33019"/>
        <dbReference type="ChEBI" id="CHEBI:58017"/>
        <dbReference type="ChEBI" id="CHEBI:456215"/>
        <dbReference type="EC" id="2.4.2.7"/>
    </reaction>
</comment>
<comment type="pathway">
    <text evidence="1">Purine metabolism; AMP biosynthesis via salvage pathway; AMP from adenine: step 1/1.</text>
</comment>
<comment type="subunit">
    <text evidence="1">Homodimer.</text>
</comment>
<comment type="subcellular location">
    <subcellularLocation>
        <location evidence="1">Cytoplasm</location>
    </subcellularLocation>
</comment>
<comment type="similarity">
    <text evidence="1">Belongs to the purine/pyrimidine phosphoribosyltransferase family.</text>
</comment>
<organism>
    <name type="scientific">Mycoplasma mobile (strain ATCC 43663 / 163K / NCTC 11711)</name>
    <name type="common">Mesomycoplasma mobile</name>
    <dbReference type="NCBI Taxonomy" id="267748"/>
    <lineage>
        <taxon>Bacteria</taxon>
        <taxon>Bacillati</taxon>
        <taxon>Mycoplasmatota</taxon>
        <taxon>Mycoplasmoidales</taxon>
        <taxon>Metamycoplasmataceae</taxon>
        <taxon>Mesomycoplasma</taxon>
    </lineage>
</organism>
<accession>Q6KI92</accession>
<proteinExistence type="inferred from homology"/>
<feature type="chain" id="PRO_0000149413" description="Adenine phosphoribosyltransferase">
    <location>
        <begin position="1"/>
        <end position="171"/>
    </location>
</feature>
<evidence type="ECO:0000255" key="1">
    <source>
        <dbReference type="HAMAP-Rule" id="MF_00004"/>
    </source>
</evidence>